<comment type="function">
    <text evidence="1">Photosystem II (PSII) is a light-driven water:plastoquinone oxidoreductase that uses light energy to abstract electrons from H(2)O, generating O(2) and a proton gradient subsequently used for ATP formation. It consists of a core antenna complex that captures photons, and an electron transfer chain that converts photonic excitation into a charge separation. The D1/D2 (PsbA/PsbD) reaction center heterodimer binds P680, the primary electron donor of PSII as well as several subsequent electron acceptors.</text>
</comment>
<comment type="catalytic activity">
    <reaction evidence="1">
        <text>2 a plastoquinone + 4 hnu + 2 H2O = 2 a plastoquinol + O2</text>
        <dbReference type="Rhea" id="RHEA:36359"/>
        <dbReference type="Rhea" id="RHEA-COMP:9561"/>
        <dbReference type="Rhea" id="RHEA-COMP:9562"/>
        <dbReference type="ChEBI" id="CHEBI:15377"/>
        <dbReference type="ChEBI" id="CHEBI:15379"/>
        <dbReference type="ChEBI" id="CHEBI:17757"/>
        <dbReference type="ChEBI" id="CHEBI:30212"/>
        <dbReference type="ChEBI" id="CHEBI:62192"/>
        <dbReference type="EC" id="1.10.3.9"/>
    </reaction>
</comment>
<comment type="cofactor">
    <text evidence="1">The D1/D2 heterodimer binds P680, chlorophylls that are the primary electron donor of PSII, and subsequent electron acceptors. It shares a non-heme iron and each subunit binds pheophytin, quinone, additional chlorophylls, carotenoids and lipids. D1 provides most of the ligands for the Mn4-Ca-O5 cluster of the oxygen-evolving complex (OEC). There is also a Cl(-1) ion associated with D1 and D2, which is required for oxygen evolution. The PSII complex binds additional chlorophylls, carotenoids and specific lipids.</text>
</comment>
<comment type="subunit">
    <text evidence="1">PSII is composed of 1 copy each of membrane proteins PsbA, PsbB, PsbC, PsbD, PsbE, PsbF, PsbH, PsbI, PsbJ, PsbK, PsbL, PsbM, PsbT, PsbX, PsbY, PsbZ, Psb30/Ycf12, peripheral proteins PsbO, CyanoQ (PsbQ), PsbU, PsbV and a large number of cofactors. It forms dimeric complexes.</text>
</comment>
<comment type="subcellular location">
    <subcellularLocation>
        <location evidence="1">Cellular thylakoid membrane</location>
        <topology evidence="1">Multi-pass membrane protein</topology>
    </subcellularLocation>
</comment>
<comment type="PTM">
    <text evidence="1">Tyr-160 forms a radical intermediate that is referred to as redox-active TyrZ, YZ or Y-Z.</text>
</comment>
<comment type="PTM">
    <text evidence="1">C-terminally processed by CtpA; processing is essential to allow assembly of the oxygen-evolving complex and thus photosynthetic growth.</text>
</comment>
<comment type="miscellaneous">
    <text evidence="1">Cyanobacteria usually contain more than 2 copies of the psbA gene.</text>
</comment>
<comment type="miscellaneous">
    <text evidence="1">2 of the reaction center chlorophylls (ChlD1 and ChlD2) are entirely coordinated by water.</text>
</comment>
<comment type="miscellaneous">
    <text evidence="1">Herbicides such as atrazine, BNT, diuron or ioxynil bind in the Q(B) binding site and block subsequent electron transfer.</text>
</comment>
<comment type="similarity">
    <text evidence="1">Belongs to the reaction center PufL/M/PsbA/D family.</text>
</comment>
<feature type="chain" id="PRO_0000316390" description="Photosystem II protein D1 3" evidence="1">
    <location>
        <begin position="1"/>
        <end position="343"/>
    </location>
</feature>
<feature type="propeptide" id="PRO_0000316391" evidence="1">
    <location>
        <begin position="344"/>
        <end position="358"/>
    </location>
</feature>
<feature type="transmembrane region" description="Helical" evidence="1">
    <location>
        <begin position="28"/>
        <end position="45"/>
    </location>
</feature>
<feature type="transmembrane region" description="Helical" evidence="1">
    <location>
        <begin position="117"/>
        <end position="132"/>
    </location>
</feature>
<feature type="transmembrane region" description="Helical" evidence="1">
    <location>
        <begin position="141"/>
        <end position="155"/>
    </location>
</feature>
<feature type="transmembrane region" description="Helical" evidence="1">
    <location>
        <begin position="196"/>
        <end position="217"/>
    </location>
</feature>
<feature type="transmembrane region" description="Helical" evidence="1">
    <location>
        <begin position="273"/>
        <end position="287"/>
    </location>
</feature>
<feature type="binding site" description="axial binding residue" evidence="1">
    <location>
        <position position="117"/>
    </location>
    <ligand>
        <name>chlorophyll a</name>
        <dbReference type="ChEBI" id="CHEBI:58416"/>
        <label>ChlzD1</label>
    </ligand>
    <ligandPart>
        <name>Mg</name>
        <dbReference type="ChEBI" id="CHEBI:25107"/>
    </ligandPart>
</feature>
<feature type="binding site" evidence="1">
    <location>
        <position position="125"/>
    </location>
    <ligand>
        <name>pheophytin a</name>
        <dbReference type="ChEBI" id="CHEBI:136840"/>
        <label>D1</label>
    </ligand>
</feature>
<feature type="binding site" evidence="1">
    <location>
        <position position="169"/>
    </location>
    <ligand>
        <name>[CaMn4O5] cluster</name>
        <dbReference type="ChEBI" id="CHEBI:189552"/>
    </ligand>
</feature>
<feature type="binding site" evidence="1">
    <location>
        <position position="188"/>
    </location>
    <ligand>
        <name>[CaMn4O5] cluster</name>
        <dbReference type="ChEBI" id="CHEBI:189552"/>
    </ligand>
</feature>
<feature type="binding site" description="axial binding residue" evidence="1">
    <location>
        <position position="197"/>
    </location>
    <ligand>
        <name>chlorophyll a</name>
        <dbReference type="ChEBI" id="CHEBI:58416"/>
        <label>PD1</label>
    </ligand>
    <ligandPart>
        <name>Mg</name>
        <dbReference type="ChEBI" id="CHEBI:25107"/>
    </ligandPart>
</feature>
<feature type="binding site" evidence="1">
    <location>
        <position position="214"/>
    </location>
    <ligand>
        <name>a quinone</name>
        <dbReference type="ChEBI" id="CHEBI:132124"/>
        <label>B</label>
    </ligand>
</feature>
<feature type="binding site" evidence="1">
    <location>
        <position position="214"/>
    </location>
    <ligand>
        <name>Fe cation</name>
        <dbReference type="ChEBI" id="CHEBI:24875"/>
        <note>ligand shared with heterodimeric partner</note>
    </ligand>
</feature>
<feature type="binding site" evidence="1">
    <location>
        <begin position="263"/>
        <end position="264"/>
    </location>
    <ligand>
        <name>a quinone</name>
        <dbReference type="ChEBI" id="CHEBI:132124"/>
        <label>B</label>
    </ligand>
</feature>
<feature type="binding site" evidence="1">
    <location>
        <position position="271"/>
    </location>
    <ligand>
        <name>Fe cation</name>
        <dbReference type="ChEBI" id="CHEBI:24875"/>
        <note>ligand shared with heterodimeric partner</note>
    </ligand>
</feature>
<feature type="binding site" evidence="1">
    <location>
        <position position="331"/>
    </location>
    <ligand>
        <name>[CaMn4O5] cluster</name>
        <dbReference type="ChEBI" id="CHEBI:189552"/>
    </ligand>
</feature>
<feature type="binding site" evidence="1">
    <location>
        <position position="332"/>
    </location>
    <ligand>
        <name>[CaMn4O5] cluster</name>
        <dbReference type="ChEBI" id="CHEBI:189552"/>
    </ligand>
</feature>
<feature type="binding site" evidence="1">
    <location>
        <position position="341"/>
    </location>
    <ligand>
        <name>[CaMn4O5] cluster</name>
        <dbReference type="ChEBI" id="CHEBI:189552"/>
    </ligand>
</feature>
<feature type="binding site" evidence="1">
    <location>
        <position position="343"/>
    </location>
    <ligand>
        <name>[CaMn4O5] cluster</name>
        <dbReference type="ChEBI" id="CHEBI:189552"/>
    </ligand>
</feature>
<feature type="site" description="Tyrosine radical intermediate" evidence="1">
    <location>
        <position position="160"/>
    </location>
</feature>
<feature type="site" description="Stabilizes free radical intermediate" evidence="1">
    <location>
        <position position="189"/>
    </location>
</feature>
<feature type="site" description="Cleavage; by CtpA" evidence="1">
    <location>
        <begin position="343"/>
        <end position="344"/>
    </location>
</feature>
<gene>
    <name evidence="1 2" type="primary">psbA3</name>
    <name type="ordered locus">sync_1858</name>
</gene>
<protein>
    <recommendedName>
        <fullName evidence="1">Photosystem II protein D1 3</fullName>
        <shortName evidence="1">PSII D1 protein 3</shortName>
        <ecNumber evidence="1">1.10.3.9</ecNumber>
    </recommendedName>
    <alternativeName>
        <fullName evidence="1">Photosystem II Q(B) protein 3</fullName>
    </alternativeName>
</protein>
<evidence type="ECO:0000255" key="1">
    <source>
        <dbReference type="HAMAP-Rule" id="MF_01379"/>
    </source>
</evidence>
<evidence type="ECO:0000305" key="2"/>
<sequence>MATAVRSGRLSSWQSFCQWVTDTNNRIYIGWFGVLMIPCLLAATTCFIVAFIAAPPVDIDGIREPVAGSLLYGNNIISGAVVPSSNAIGLHFYPIWDAASLDEWLYNGGTYQLVVFHFLIGISAYMGRQWELSYRLGMRPWICVAYSAPLSAAMAVFLVYPFGQGSFSDGMPLGISGTFNFMLVFQAEHNILMHPFHMLGVAGVFGGSLFSAMHGSLVTSSLVRETTENESHNYGYKFGQEEETYNIVAAHGYFGRLIFQYASFNNSRSLHFLLGAWPVVGIWFTSMGVSTMAFNLNGFNFNQSILDSQGRVLNTWADMVNRAGLGMEVMHERNAHNFPLDLATVESTPVALQAPAIG</sequence>
<accession>Q0I910</accession>
<organism>
    <name type="scientific">Synechococcus sp. (strain CC9311)</name>
    <dbReference type="NCBI Taxonomy" id="64471"/>
    <lineage>
        <taxon>Bacteria</taxon>
        <taxon>Bacillati</taxon>
        <taxon>Cyanobacteriota</taxon>
        <taxon>Cyanophyceae</taxon>
        <taxon>Synechococcales</taxon>
        <taxon>Synechococcaceae</taxon>
        <taxon>Synechococcus</taxon>
    </lineage>
</organism>
<keyword id="KW-0106">Calcium</keyword>
<keyword id="KW-0148">Chlorophyll</keyword>
<keyword id="KW-0157">Chromophore</keyword>
<keyword id="KW-0249">Electron transport</keyword>
<keyword id="KW-0359">Herbicide resistance</keyword>
<keyword id="KW-0408">Iron</keyword>
<keyword id="KW-0460">Magnesium</keyword>
<keyword id="KW-0464">Manganese</keyword>
<keyword id="KW-0472">Membrane</keyword>
<keyword id="KW-0479">Metal-binding</keyword>
<keyword id="KW-0560">Oxidoreductase</keyword>
<keyword id="KW-0602">Photosynthesis</keyword>
<keyword id="KW-0604">Photosystem II</keyword>
<keyword id="KW-1185">Reference proteome</keyword>
<keyword id="KW-0793">Thylakoid</keyword>
<keyword id="KW-0812">Transmembrane</keyword>
<keyword id="KW-1133">Transmembrane helix</keyword>
<keyword id="KW-0813">Transport</keyword>
<dbReference type="EC" id="1.10.3.9" evidence="1"/>
<dbReference type="EMBL" id="CP000435">
    <property type="protein sequence ID" value="ABI46741.1"/>
    <property type="molecule type" value="Genomic_DNA"/>
</dbReference>
<dbReference type="RefSeq" id="WP_011619775.1">
    <property type="nucleotide sequence ID" value="NC_008319.1"/>
</dbReference>
<dbReference type="SMR" id="Q0I910"/>
<dbReference type="STRING" id="64471.sync_1858"/>
<dbReference type="KEGG" id="syg:sync_1858"/>
<dbReference type="eggNOG" id="ENOG502Z87P">
    <property type="taxonomic scope" value="Bacteria"/>
</dbReference>
<dbReference type="HOGENOM" id="CLU_054206_1_0_3"/>
<dbReference type="OrthoDB" id="505356at2"/>
<dbReference type="Proteomes" id="UP000001961">
    <property type="component" value="Chromosome"/>
</dbReference>
<dbReference type="GO" id="GO:0009523">
    <property type="term" value="C:photosystem II"/>
    <property type="evidence" value="ECO:0007669"/>
    <property type="project" value="UniProtKB-KW"/>
</dbReference>
<dbReference type="GO" id="GO:0031676">
    <property type="term" value="C:plasma membrane-derived thylakoid membrane"/>
    <property type="evidence" value="ECO:0007669"/>
    <property type="project" value="UniProtKB-SubCell"/>
</dbReference>
<dbReference type="GO" id="GO:0016168">
    <property type="term" value="F:chlorophyll binding"/>
    <property type="evidence" value="ECO:0007669"/>
    <property type="project" value="UniProtKB-UniRule"/>
</dbReference>
<dbReference type="GO" id="GO:0045156">
    <property type="term" value="F:electron transporter, transferring electrons within the cyclic electron transport pathway of photosynthesis activity"/>
    <property type="evidence" value="ECO:0007669"/>
    <property type="project" value="InterPro"/>
</dbReference>
<dbReference type="GO" id="GO:0005506">
    <property type="term" value="F:iron ion binding"/>
    <property type="evidence" value="ECO:0007669"/>
    <property type="project" value="UniProtKB-UniRule"/>
</dbReference>
<dbReference type="GO" id="GO:0016682">
    <property type="term" value="F:oxidoreductase activity, acting on diphenols and related substances as donors, oxygen as acceptor"/>
    <property type="evidence" value="ECO:0007669"/>
    <property type="project" value="UniProtKB-UniRule"/>
</dbReference>
<dbReference type="GO" id="GO:0010242">
    <property type="term" value="F:oxygen evolving activity"/>
    <property type="evidence" value="ECO:0007669"/>
    <property type="project" value="UniProtKB-EC"/>
</dbReference>
<dbReference type="GO" id="GO:0009772">
    <property type="term" value="P:photosynthetic electron transport in photosystem II"/>
    <property type="evidence" value="ECO:0007669"/>
    <property type="project" value="InterPro"/>
</dbReference>
<dbReference type="GO" id="GO:0009635">
    <property type="term" value="P:response to herbicide"/>
    <property type="evidence" value="ECO:0007669"/>
    <property type="project" value="UniProtKB-KW"/>
</dbReference>
<dbReference type="CDD" id="cd09289">
    <property type="entry name" value="Photosystem-II_D1"/>
    <property type="match status" value="1"/>
</dbReference>
<dbReference type="FunFam" id="1.20.85.10:FF:000002">
    <property type="entry name" value="Photosystem II protein D1"/>
    <property type="match status" value="1"/>
</dbReference>
<dbReference type="Gene3D" id="1.20.85.10">
    <property type="entry name" value="Photosystem II protein D1-like"/>
    <property type="match status" value="1"/>
</dbReference>
<dbReference type="HAMAP" id="MF_01379">
    <property type="entry name" value="PSII_PsbA_D1"/>
    <property type="match status" value="1"/>
</dbReference>
<dbReference type="InterPro" id="IPR055266">
    <property type="entry name" value="D1/D2"/>
</dbReference>
<dbReference type="InterPro" id="IPR036854">
    <property type="entry name" value="Photo_II_D1/D2_sf"/>
</dbReference>
<dbReference type="InterPro" id="IPR000484">
    <property type="entry name" value="Photo_RC_L/M"/>
</dbReference>
<dbReference type="InterPro" id="IPR055265">
    <property type="entry name" value="Photo_RC_L/M_CS"/>
</dbReference>
<dbReference type="InterPro" id="IPR005867">
    <property type="entry name" value="PSII_D1"/>
</dbReference>
<dbReference type="NCBIfam" id="TIGR01151">
    <property type="entry name" value="psbA"/>
    <property type="match status" value="1"/>
</dbReference>
<dbReference type="PANTHER" id="PTHR33149:SF12">
    <property type="entry name" value="PHOTOSYSTEM II D2 PROTEIN"/>
    <property type="match status" value="1"/>
</dbReference>
<dbReference type="PANTHER" id="PTHR33149">
    <property type="entry name" value="PHOTOSYSTEM II PROTEIN D1"/>
    <property type="match status" value="1"/>
</dbReference>
<dbReference type="Pfam" id="PF00124">
    <property type="entry name" value="Photo_RC"/>
    <property type="match status" value="1"/>
</dbReference>
<dbReference type="PRINTS" id="PR00256">
    <property type="entry name" value="REACTNCENTRE"/>
</dbReference>
<dbReference type="SUPFAM" id="SSF81483">
    <property type="entry name" value="Bacterial photosystem II reaction centre, L and M subunits"/>
    <property type="match status" value="1"/>
</dbReference>
<dbReference type="PROSITE" id="PS00244">
    <property type="entry name" value="REACTION_CENTER"/>
    <property type="match status" value="1"/>
</dbReference>
<reference key="1">
    <citation type="journal article" date="2006" name="Proc. Natl. Acad. Sci. U.S.A.">
        <title>Genome sequence of Synechococcus CC9311: insights into adaptation to a coastal environment.</title>
        <authorList>
            <person name="Palenik B."/>
            <person name="Ren Q."/>
            <person name="Dupont C.L."/>
            <person name="Myers G.S."/>
            <person name="Heidelberg J.F."/>
            <person name="Badger J.H."/>
            <person name="Madupu R."/>
            <person name="Nelson W.C."/>
            <person name="Brinkac L.M."/>
            <person name="Dodson R.J."/>
            <person name="Durkin A.S."/>
            <person name="Daugherty S.C."/>
            <person name="Sullivan S.A."/>
            <person name="Khouri H."/>
            <person name="Mohamoud Y."/>
            <person name="Halpin R."/>
            <person name="Paulsen I.T."/>
        </authorList>
    </citation>
    <scope>NUCLEOTIDE SEQUENCE [LARGE SCALE GENOMIC DNA]</scope>
    <source>
        <strain>CC9311</strain>
    </source>
</reference>
<name>PSBA3_SYNS3</name>
<proteinExistence type="inferred from homology"/>